<name>PARE3_CAUVC</name>
<evidence type="ECO:0000269" key="1">
    <source>
    </source>
</evidence>
<evidence type="ECO:0000305" key="2"/>
<comment type="function">
    <text evidence="1">Toxic component of a type II toxin-antitoxin (TA) system. Its toxic effect is neutralized by coexpression with cognate antitoxin ParD3 but no other ParD or RelB antitoxin.</text>
</comment>
<comment type="disruption phenotype">
    <text evidence="1">No visible phenotype when deleted singly or as the parDE3 operon.</text>
</comment>
<comment type="similarity">
    <text evidence="2">Belongs to the RelE toxin family.</text>
</comment>
<feature type="chain" id="PRO_0000408369" description="Toxin ParE3">
    <location>
        <begin position="1"/>
        <end position="100"/>
    </location>
</feature>
<gene>
    <name type="primary">parE3</name>
    <name type="ordered locus">CC_2756</name>
</gene>
<reference key="1">
    <citation type="journal article" date="2001" name="Proc. Natl. Acad. Sci. U.S.A.">
        <title>Complete genome sequence of Caulobacter crescentus.</title>
        <authorList>
            <person name="Nierman W.C."/>
            <person name="Feldblyum T.V."/>
            <person name="Laub M.T."/>
            <person name="Paulsen I.T."/>
            <person name="Nelson K.E."/>
            <person name="Eisen J.A."/>
            <person name="Heidelberg J.F."/>
            <person name="Alley M.R.K."/>
            <person name="Ohta N."/>
            <person name="Maddock J.R."/>
            <person name="Potocka I."/>
            <person name="Nelson W.C."/>
            <person name="Newton A."/>
            <person name="Stephens C."/>
            <person name="Phadke N.D."/>
            <person name="Ely B."/>
            <person name="DeBoy R.T."/>
            <person name="Dodson R.J."/>
            <person name="Durkin A.S."/>
            <person name="Gwinn M.L."/>
            <person name="Haft D.H."/>
            <person name="Kolonay J.F."/>
            <person name="Smit J."/>
            <person name="Craven M.B."/>
            <person name="Khouri H.M."/>
            <person name="Shetty J."/>
            <person name="Berry K.J."/>
            <person name="Utterback T.R."/>
            <person name="Tran K."/>
            <person name="Wolf A.M."/>
            <person name="Vamathevan J.J."/>
            <person name="Ermolaeva M.D."/>
            <person name="White O."/>
            <person name="Salzberg S.L."/>
            <person name="Venter J.C."/>
            <person name="Shapiro L."/>
            <person name="Fraser C.M."/>
        </authorList>
    </citation>
    <scope>NUCLEOTIDE SEQUENCE [LARGE SCALE GENOMIC DNA]</scope>
    <source>
        <strain>ATCC 19089 / CIP 103742 / CB 15</strain>
    </source>
</reference>
<reference key="2">
    <citation type="journal article" date="2005" name="Nucleic Acids Res.">
        <title>Toxin-antitoxin loci are highly abundant in free-living but lost from host-associated prokaryotes.</title>
        <authorList>
            <person name="Pandey D.P."/>
            <person name="Gerdes K."/>
        </authorList>
    </citation>
    <scope>POSSIBLE FUNCTION</scope>
    <source>
        <strain>ATCC 19089 / CIP 103742 / CB 15</strain>
    </source>
</reference>
<reference key="3">
    <citation type="journal article" date="2010" name="Mol. Microbiol.">
        <title>Interaction specificity, toxicity and regulation of a paralogous set of ParE/RelE-family toxin-antitoxin systems.</title>
        <authorList>
            <person name="Fiebig A."/>
            <person name="Castro Rojas C.M."/>
            <person name="Siegal-Gaskins D."/>
            <person name="Crosson S."/>
        </authorList>
    </citation>
    <scope>FUNCTION AS A TOXIN</scope>
    <scope>DISRUPTION PHENOTYPE</scope>
    <source>
        <strain>ATCC 19089 / CIP 103742 / CB 15</strain>
    </source>
</reference>
<organism>
    <name type="scientific">Caulobacter vibrioides (strain ATCC 19089 / CIP 103742 / CB 15)</name>
    <name type="common">Caulobacter crescentus</name>
    <dbReference type="NCBI Taxonomy" id="190650"/>
    <lineage>
        <taxon>Bacteria</taxon>
        <taxon>Pseudomonadati</taxon>
        <taxon>Pseudomonadota</taxon>
        <taxon>Alphaproteobacteria</taxon>
        <taxon>Caulobacterales</taxon>
        <taxon>Caulobacteraceae</taxon>
        <taxon>Caulobacter</taxon>
    </lineage>
</organism>
<protein>
    <recommendedName>
        <fullName>Toxin ParE3</fullName>
    </recommendedName>
</protein>
<keyword id="KW-1185">Reference proteome</keyword>
<keyword id="KW-1277">Toxin-antitoxin system</keyword>
<dbReference type="EMBL" id="AE005673">
    <property type="protein sequence ID" value="AAK24720.1"/>
    <property type="molecule type" value="Genomic_DNA"/>
</dbReference>
<dbReference type="PIR" id="D87590">
    <property type="entry name" value="D87590"/>
</dbReference>
<dbReference type="RefSeq" id="NP_421552.1">
    <property type="nucleotide sequence ID" value="NC_002696.2"/>
</dbReference>
<dbReference type="RefSeq" id="WP_010920597.1">
    <property type="nucleotide sequence ID" value="NC_002696.2"/>
</dbReference>
<dbReference type="SMR" id="Q9A4S4"/>
<dbReference type="STRING" id="190650.CC_2756"/>
<dbReference type="EnsemblBacteria" id="AAK24720">
    <property type="protein sequence ID" value="AAK24720"/>
    <property type="gene ID" value="CC_2756"/>
</dbReference>
<dbReference type="KEGG" id="ccr:CC_2756"/>
<dbReference type="PATRIC" id="fig|190650.5.peg.2757"/>
<dbReference type="eggNOG" id="COG3668">
    <property type="taxonomic scope" value="Bacteria"/>
</dbReference>
<dbReference type="HOGENOM" id="CLU_147162_10_1_5"/>
<dbReference type="BioCyc" id="CAULO:CC2756-MONOMER"/>
<dbReference type="Proteomes" id="UP000001816">
    <property type="component" value="Chromosome"/>
</dbReference>
<dbReference type="Gene3D" id="3.30.2310.20">
    <property type="entry name" value="RelE-like"/>
    <property type="match status" value="1"/>
</dbReference>
<dbReference type="InterPro" id="IPR007712">
    <property type="entry name" value="RelE/ParE_toxin"/>
</dbReference>
<dbReference type="InterPro" id="IPR035093">
    <property type="entry name" value="RelE/ParE_toxin_dom_sf"/>
</dbReference>
<dbReference type="Pfam" id="PF05016">
    <property type="entry name" value="ParE_toxin"/>
    <property type="match status" value="1"/>
</dbReference>
<accession>Q9A4S4</accession>
<sequence length="100" mass="11389">MGRVIRTRPVSGDLDRVFRDVCENNGVKVASAQLNRIESVFHRLSAFPRLGRDRSDLRPGLRTFSVKPWQVLYRLNGEDVVILRILDGRMNLAAQLGKKT</sequence>
<proteinExistence type="evidence at protein level"/>